<protein>
    <recommendedName>
        <fullName evidence="1">Ferrochelatase</fullName>
        <ecNumber evidence="1">4.98.1.1</ecNumber>
    </recommendedName>
    <alternativeName>
        <fullName evidence="1">Heme synthase</fullName>
    </alternativeName>
    <alternativeName>
        <fullName evidence="1">Protoheme ferro-lyase</fullName>
    </alternativeName>
</protein>
<dbReference type="EC" id="4.98.1.1" evidence="1"/>
<dbReference type="EMBL" id="AF358663">
    <property type="protein sequence ID" value="AAK43712.1"/>
    <property type="molecule type" value="Genomic_DNA"/>
</dbReference>
<dbReference type="EMBL" id="AY027659">
    <property type="protein sequence ID" value="AAK14798.1"/>
    <property type="molecule type" value="Genomic_DNA"/>
</dbReference>
<dbReference type="EMBL" id="AE017224">
    <property type="protein sequence ID" value="AAX75527.1"/>
    <property type="molecule type" value="Genomic_DNA"/>
</dbReference>
<dbReference type="RefSeq" id="WP_002966503.1">
    <property type="nucleotide sequence ID" value="NC_006933.1"/>
</dbReference>
<dbReference type="SMR" id="P0A3D8"/>
<dbReference type="EnsemblBacteria" id="AAX75527">
    <property type="protein sequence ID" value="AAX75527"/>
    <property type="gene ID" value="BruAb2_0076"/>
</dbReference>
<dbReference type="GeneID" id="93015947"/>
<dbReference type="KEGG" id="bmb:BruAb2_0076"/>
<dbReference type="HOGENOM" id="CLU_018884_0_0_5"/>
<dbReference type="BRENDA" id="4.99.1.1">
    <property type="organism ID" value="994"/>
</dbReference>
<dbReference type="UniPathway" id="UPA00252">
    <property type="reaction ID" value="UER00325"/>
</dbReference>
<dbReference type="PRO" id="PR:P0A3D8"/>
<dbReference type="Proteomes" id="UP000000540">
    <property type="component" value="Chromosome II"/>
</dbReference>
<dbReference type="GO" id="GO:0005737">
    <property type="term" value="C:cytoplasm"/>
    <property type="evidence" value="ECO:0007669"/>
    <property type="project" value="UniProtKB-SubCell"/>
</dbReference>
<dbReference type="GO" id="GO:0004325">
    <property type="term" value="F:ferrochelatase activity"/>
    <property type="evidence" value="ECO:0007669"/>
    <property type="project" value="UniProtKB-UniRule"/>
</dbReference>
<dbReference type="GO" id="GO:0046872">
    <property type="term" value="F:metal ion binding"/>
    <property type="evidence" value="ECO:0007669"/>
    <property type="project" value="UniProtKB-KW"/>
</dbReference>
<dbReference type="GO" id="GO:0006783">
    <property type="term" value="P:heme biosynthetic process"/>
    <property type="evidence" value="ECO:0007669"/>
    <property type="project" value="UniProtKB-UniRule"/>
</dbReference>
<dbReference type="CDD" id="cd00419">
    <property type="entry name" value="Ferrochelatase_C"/>
    <property type="match status" value="1"/>
</dbReference>
<dbReference type="CDD" id="cd03411">
    <property type="entry name" value="Ferrochelatase_N"/>
    <property type="match status" value="1"/>
</dbReference>
<dbReference type="FunFam" id="3.40.50.1400:FF:000002">
    <property type="entry name" value="Ferrochelatase"/>
    <property type="match status" value="1"/>
</dbReference>
<dbReference type="Gene3D" id="3.40.50.1400">
    <property type="match status" value="2"/>
</dbReference>
<dbReference type="HAMAP" id="MF_00323">
    <property type="entry name" value="Ferrochelatase"/>
    <property type="match status" value="1"/>
</dbReference>
<dbReference type="InterPro" id="IPR001015">
    <property type="entry name" value="Ferrochelatase"/>
</dbReference>
<dbReference type="InterPro" id="IPR019772">
    <property type="entry name" value="Ferrochelatase_AS"/>
</dbReference>
<dbReference type="InterPro" id="IPR033644">
    <property type="entry name" value="Ferrochelatase_C"/>
</dbReference>
<dbReference type="InterPro" id="IPR033659">
    <property type="entry name" value="Ferrochelatase_N"/>
</dbReference>
<dbReference type="NCBIfam" id="TIGR00109">
    <property type="entry name" value="hemH"/>
    <property type="match status" value="1"/>
</dbReference>
<dbReference type="PANTHER" id="PTHR11108">
    <property type="entry name" value="FERROCHELATASE"/>
    <property type="match status" value="1"/>
</dbReference>
<dbReference type="PANTHER" id="PTHR11108:SF1">
    <property type="entry name" value="FERROCHELATASE, MITOCHONDRIAL"/>
    <property type="match status" value="1"/>
</dbReference>
<dbReference type="Pfam" id="PF00762">
    <property type="entry name" value="Ferrochelatase"/>
    <property type="match status" value="1"/>
</dbReference>
<dbReference type="SUPFAM" id="SSF53800">
    <property type="entry name" value="Chelatase"/>
    <property type="match status" value="1"/>
</dbReference>
<dbReference type="PROSITE" id="PS00534">
    <property type="entry name" value="FERROCHELATASE"/>
    <property type="match status" value="1"/>
</dbReference>
<reference key="1">
    <citation type="submission" date="2001-03" db="EMBL/GenBank/DDBJ databases">
        <title>Omp10 gene is located upstream of hemH in Brucella.</title>
        <authorList>
            <person name="Tibor A."/>
            <person name="Aidant N."/>
            <person name="Letesson J.-J."/>
        </authorList>
    </citation>
    <scope>NUCLEOTIDE SEQUENCE [GENOMIC DNA]</scope>
    <source>
        <strain>544 / Biovar 1</strain>
    </source>
</reference>
<reference key="2">
    <citation type="journal article" date="2001" name="Infect. Immun.">
        <title>Ferrochelatase is present in Brucella abortus and is critical for its intracellular survival and virulence.</title>
        <authorList>
            <person name="Almiron M."/>
            <person name="Martinez M."/>
            <person name="Sanjuan N."/>
            <person name="Ugalde R.A."/>
        </authorList>
    </citation>
    <scope>NUCLEOTIDE SEQUENCE [GENOMIC DNA]</scope>
</reference>
<reference key="3">
    <citation type="journal article" date="2005" name="J. Bacteriol.">
        <title>Completion of the genome sequence of Brucella abortus and comparison to the highly similar genomes of Brucella melitensis and Brucella suis.</title>
        <authorList>
            <person name="Halling S.M."/>
            <person name="Peterson-Burch B.D."/>
            <person name="Bricker B.J."/>
            <person name="Zuerner R.L."/>
            <person name="Qing Z."/>
            <person name="Li L.-L."/>
            <person name="Kapur V."/>
            <person name="Alt D.P."/>
            <person name="Olsen S.C."/>
        </authorList>
    </citation>
    <scope>NUCLEOTIDE SEQUENCE [LARGE SCALE GENOMIC DNA]</scope>
    <source>
        <strain>9-941</strain>
    </source>
</reference>
<name>HEMH_BRUAB</name>
<accession>P0A3D8</accession>
<accession>Q57A07</accession>
<accession>Q939N8</accession>
<accession>Q93TG2</accession>
<comment type="function">
    <text evidence="1">Catalyzes the ferrous insertion into protoporphyrin IX.</text>
</comment>
<comment type="catalytic activity">
    <reaction evidence="1">
        <text>heme b + 2 H(+) = protoporphyrin IX + Fe(2+)</text>
        <dbReference type="Rhea" id="RHEA:22584"/>
        <dbReference type="ChEBI" id="CHEBI:15378"/>
        <dbReference type="ChEBI" id="CHEBI:29033"/>
        <dbReference type="ChEBI" id="CHEBI:57306"/>
        <dbReference type="ChEBI" id="CHEBI:60344"/>
        <dbReference type="EC" id="4.98.1.1"/>
    </reaction>
</comment>
<comment type="pathway">
    <text evidence="1">Porphyrin-containing compound metabolism; protoheme biosynthesis; protoheme from protoporphyrin-IX: step 1/1.</text>
</comment>
<comment type="subcellular location">
    <subcellularLocation>
        <location evidence="1">Cytoplasm</location>
    </subcellularLocation>
</comment>
<comment type="similarity">
    <text evidence="1">Belongs to the ferrochelatase family.</text>
</comment>
<proteinExistence type="inferred from homology"/>
<feature type="chain" id="PRO_0000175120" description="Ferrochelatase">
    <location>
        <begin position="1"/>
        <end position="352"/>
    </location>
</feature>
<feature type="binding site" evidence="1">
    <location>
        <position position="222"/>
    </location>
    <ligand>
        <name>Fe cation</name>
        <dbReference type="ChEBI" id="CHEBI:24875"/>
    </ligand>
</feature>
<feature type="binding site" evidence="1">
    <location>
        <position position="303"/>
    </location>
    <ligand>
        <name>Fe cation</name>
        <dbReference type="ChEBI" id="CHEBI:24875"/>
    </ligand>
</feature>
<feature type="sequence conflict" description="In Ref. 2; AAK14798." evidence="2" ref="2">
    <original>A</original>
    <variation>V</variation>
    <location>
        <position position="208"/>
    </location>
</feature>
<feature type="sequence conflict" description="In Ref. 1; AAK43712." evidence="2" ref="1">
    <original>L</original>
    <variation>S</variation>
    <location>
        <position position="289"/>
    </location>
</feature>
<organism>
    <name type="scientific">Brucella abortus biovar 1 (strain 9-941)</name>
    <dbReference type="NCBI Taxonomy" id="262698"/>
    <lineage>
        <taxon>Bacteria</taxon>
        <taxon>Pseudomonadati</taxon>
        <taxon>Pseudomonadota</taxon>
        <taxon>Alphaproteobacteria</taxon>
        <taxon>Hyphomicrobiales</taxon>
        <taxon>Brucellaceae</taxon>
        <taxon>Brucella/Ochrobactrum group</taxon>
        <taxon>Brucella</taxon>
    </lineage>
</organism>
<sequence>MSGTDKVRVNVSQTAQTPLHTSAKLPKVGVLLVNLGTPDGTSYGPMRRYLAEFLSDRRVIEWSRLIWYPILYGIVLNTRPRRSGRLYDRIWNHENNESPLRTYTRAQGEKLAKALSDQPNVVVDWAMRYGQPSIESITDRLLQQGCERIVIFPLYPQYSATTTATVNDKFFEALMKKRFMPAIRTVPSYEAEPVYIDALARSVEKHLATLSFKPEVILTSYHGIPKSYSDKGDPYRQQCLETTRLLRERLGLGEDEMRATFQSRFGPEEWLQPYTDETVKELAKNGVKLVAVLNPGFVADCLETVDEIGNEAAEEFLENGGENFSHIPCLNDSEEGMKVIETLVRRELLGWV</sequence>
<gene>
    <name evidence="1" type="primary">hemH</name>
    <name type="ordered locus">BruAb2_0076</name>
</gene>
<keyword id="KW-0963">Cytoplasm</keyword>
<keyword id="KW-0350">Heme biosynthesis</keyword>
<keyword id="KW-0408">Iron</keyword>
<keyword id="KW-0456">Lyase</keyword>
<keyword id="KW-0479">Metal-binding</keyword>
<keyword id="KW-0627">Porphyrin biosynthesis</keyword>
<evidence type="ECO:0000255" key="1">
    <source>
        <dbReference type="HAMAP-Rule" id="MF_00323"/>
    </source>
</evidence>
<evidence type="ECO:0000305" key="2"/>